<sequence>MNIISVGVNHKTAPIEIRERISLSEVQNKEFITDLISSGLAHEAMVISTCNRTELYVVPAMHEVTGEYLKEYLIAYKDARKEVRPEHFFSRFYCGTARHLFEVSSAIDSLILGEGQILGQVKDAYRISAEVQAAGILLTRLCHTAFSVAKKVKTKTKIMEGAVSVSYAAVELAQKIFSNLSMKKILLIGAGETGELAAKHMFQKNARNIVITNRTLSKAEALAEELGTKKVLPFESYKDYLHEFDIIITAVSTKEYVLSEAEMHQTMMKRRLKPVIILDLGLPRNVDPDIAKLQNMFLKDIDALKHIIDKNLERRSAELPKVNAIIEEELIAFGQWINTLKVRPTIVDLQSKFIEIKEKELERYRYKVSEDELARMEHLTDRILKKILHHPIKMLKAPIDTANNIPSRVNLVRNVFDLEEPNQQH</sequence>
<comment type="function">
    <text evidence="1">Catalyzes the NADPH-dependent reduction of glutamyl-tRNA(Glu) to glutamate 1-semialdehyde (GSA).</text>
</comment>
<comment type="catalytic activity">
    <reaction evidence="1">
        <text>(S)-4-amino-5-oxopentanoate + tRNA(Glu) + NADP(+) = L-glutamyl-tRNA(Glu) + NADPH + H(+)</text>
        <dbReference type="Rhea" id="RHEA:12344"/>
        <dbReference type="Rhea" id="RHEA-COMP:9663"/>
        <dbReference type="Rhea" id="RHEA-COMP:9680"/>
        <dbReference type="ChEBI" id="CHEBI:15378"/>
        <dbReference type="ChEBI" id="CHEBI:57501"/>
        <dbReference type="ChEBI" id="CHEBI:57783"/>
        <dbReference type="ChEBI" id="CHEBI:58349"/>
        <dbReference type="ChEBI" id="CHEBI:78442"/>
        <dbReference type="ChEBI" id="CHEBI:78520"/>
        <dbReference type="EC" id="1.2.1.70"/>
    </reaction>
</comment>
<comment type="pathway">
    <text evidence="1">Porphyrin-containing compound metabolism; protoporphyrin-IX biosynthesis; 5-aminolevulinate from L-glutamyl-tRNA(Glu): step 1/2.</text>
</comment>
<comment type="pathway">
    <text evidence="1">Porphyrin-containing compound metabolism; chlorophyll biosynthesis.</text>
</comment>
<comment type="subunit">
    <text evidence="1">Homodimer.</text>
</comment>
<comment type="domain">
    <text evidence="1">Possesses an unusual extended V-shaped dimeric structure with each monomer consisting of three distinct domains arranged along a curved 'spinal' alpha-helix. The N-terminal catalytic domain specifically recognizes the glutamate moiety of the substrate. The second domain is the NADPH-binding domain, and the third C-terminal domain is responsible for dimerization.</text>
</comment>
<comment type="miscellaneous">
    <text evidence="1">During catalysis, the active site Cys acts as a nucleophile attacking the alpha-carbonyl group of tRNA-bound glutamate with the formation of a thioester intermediate between enzyme and glutamate, and the concomitant release of tRNA(Glu). The thioester intermediate is finally reduced by direct hydride transfer from NADPH, to form the product GSA.</text>
</comment>
<comment type="similarity">
    <text evidence="1">Belongs to the glutamyl-tRNA reductase family.</text>
</comment>
<gene>
    <name evidence="1" type="primary">hemA</name>
    <name type="ordered locus">Cpha266_1795</name>
</gene>
<evidence type="ECO:0000255" key="1">
    <source>
        <dbReference type="HAMAP-Rule" id="MF_00087"/>
    </source>
</evidence>
<feature type="chain" id="PRO_1000004608" description="Glutamyl-tRNA reductase">
    <location>
        <begin position="1"/>
        <end position="425"/>
    </location>
</feature>
<feature type="active site" description="Nucleophile" evidence="1">
    <location>
        <position position="50"/>
    </location>
</feature>
<feature type="binding site" evidence="1">
    <location>
        <begin position="49"/>
        <end position="52"/>
    </location>
    <ligand>
        <name>substrate</name>
    </ligand>
</feature>
<feature type="binding site" evidence="1">
    <location>
        <position position="109"/>
    </location>
    <ligand>
        <name>substrate</name>
    </ligand>
</feature>
<feature type="binding site" evidence="1">
    <location>
        <begin position="114"/>
        <end position="116"/>
    </location>
    <ligand>
        <name>substrate</name>
    </ligand>
</feature>
<feature type="binding site" evidence="1">
    <location>
        <position position="120"/>
    </location>
    <ligand>
        <name>substrate</name>
    </ligand>
</feature>
<feature type="binding site" evidence="1">
    <location>
        <begin position="189"/>
        <end position="194"/>
    </location>
    <ligand>
        <name>NADP(+)</name>
        <dbReference type="ChEBI" id="CHEBI:58349"/>
    </ligand>
</feature>
<feature type="site" description="Important for activity" evidence="1">
    <location>
        <position position="99"/>
    </location>
</feature>
<dbReference type="EC" id="1.2.1.70" evidence="1"/>
<dbReference type="EMBL" id="CP000492">
    <property type="protein sequence ID" value="ABL65812.1"/>
    <property type="molecule type" value="Genomic_DNA"/>
</dbReference>
<dbReference type="RefSeq" id="WP_011745619.1">
    <property type="nucleotide sequence ID" value="NC_008639.1"/>
</dbReference>
<dbReference type="SMR" id="A1BHD5"/>
<dbReference type="STRING" id="290317.Cpha266_1795"/>
<dbReference type="KEGG" id="cph:Cpha266_1795"/>
<dbReference type="eggNOG" id="COG0373">
    <property type="taxonomic scope" value="Bacteria"/>
</dbReference>
<dbReference type="HOGENOM" id="CLU_035113_2_2_10"/>
<dbReference type="OrthoDB" id="110209at2"/>
<dbReference type="UniPathway" id="UPA00251">
    <property type="reaction ID" value="UER00316"/>
</dbReference>
<dbReference type="UniPathway" id="UPA00668"/>
<dbReference type="Proteomes" id="UP000008701">
    <property type="component" value="Chromosome"/>
</dbReference>
<dbReference type="GO" id="GO:0008883">
    <property type="term" value="F:glutamyl-tRNA reductase activity"/>
    <property type="evidence" value="ECO:0007669"/>
    <property type="project" value="UniProtKB-UniRule"/>
</dbReference>
<dbReference type="GO" id="GO:0050661">
    <property type="term" value="F:NADP binding"/>
    <property type="evidence" value="ECO:0007669"/>
    <property type="project" value="InterPro"/>
</dbReference>
<dbReference type="GO" id="GO:0015995">
    <property type="term" value="P:chlorophyll biosynthetic process"/>
    <property type="evidence" value="ECO:0007669"/>
    <property type="project" value="UniProtKB-UniRule"/>
</dbReference>
<dbReference type="GO" id="GO:0019353">
    <property type="term" value="P:protoporphyrinogen IX biosynthetic process from glutamate"/>
    <property type="evidence" value="ECO:0007669"/>
    <property type="project" value="TreeGrafter"/>
</dbReference>
<dbReference type="CDD" id="cd05213">
    <property type="entry name" value="NAD_bind_Glutamyl_tRNA_reduct"/>
    <property type="match status" value="1"/>
</dbReference>
<dbReference type="FunFam" id="3.30.460.30:FF:000001">
    <property type="entry name" value="Glutamyl-tRNA reductase"/>
    <property type="match status" value="1"/>
</dbReference>
<dbReference type="FunFam" id="3.40.50.720:FF:000031">
    <property type="entry name" value="Glutamyl-tRNA reductase"/>
    <property type="match status" value="1"/>
</dbReference>
<dbReference type="Gene3D" id="3.30.460.30">
    <property type="entry name" value="Glutamyl-tRNA reductase, N-terminal domain"/>
    <property type="match status" value="1"/>
</dbReference>
<dbReference type="Gene3D" id="3.40.50.720">
    <property type="entry name" value="NAD(P)-binding Rossmann-like Domain"/>
    <property type="match status" value="1"/>
</dbReference>
<dbReference type="HAMAP" id="MF_00087">
    <property type="entry name" value="Glu_tRNA_reductase"/>
    <property type="match status" value="1"/>
</dbReference>
<dbReference type="InterPro" id="IPR000343">
    <property type="entry name" value="4pyrrol_synth_GluRdtase"/>
</dbReference>
<dbReference type="InterPro" id="IPR015896">
    <property type="entry name" value="4pyrrol_synth_GluRdtase_dimer"/>
</dbReference>
<dbReference type="InterPro" id="IPR015895">
    <property type="entry name" value="4pyrrol_synth_GluRdtase_N"/>
</dbReference>
<dbReference type="InterPro" id="IPR018214">
    <property type="entry name" value="GluRdtase_CS"/>
</dbReference>
<dbReference type="InterPro" id="IPR036453">
    <property type="entry name" value="GluRdtase_dimer_dom_sf"/>
</dbReference>
<dbReference type="InterPro" id="IPR036343">
    <property type="entry name" value="GluRdtase_N_sf"/>
</dbReference>
<dbReference type="InterPro" id="IPR036291">
    <property type="entry name" value="NAD(P)-bd_dom_sf"/>
</dbReference>
<dbReference type="InterPro" id="IPR006151">
    <property type="entry name" value="Shikm_DH/Glu-tRNA_Rdtase"/>
</dbReference>
<dbReference type="NCBIfam" id="TIGR01035">
    <property type="entry name" value="hemA"/>
    <property type="match status" value="1"/>
</dbReference>
<dbReference type="PANTHER" id="PTHR43013">
    <property type="entry name" value="GLUTAMYL-TRNA REDUCTASE"/>
    <property type="match status" value="1"/>
</dbReference>
<dbReference type="PANTHER" id="PTHR43013:SF1">
    <property type="entry name" value="GLUTAMYL-TRNA REDUCTASE"/>
    <property type="match status" value="1"/>
</dbReference>
<dbReference type="Pfam" id="PF00745">
    <property type="entry name" value="GlutR_dimer"/>
    <property type="match status" value="1"/>
</dbReference>
<dbReference type="Pfam" id="PF05201">
    <property type="entry name" value="GlutR_N"/>
    <property type="match status" value="1"/>
</dbReference>
<dbReference type="Pfam" id="PF01488">
    <property type="entry name" value="Shikimate_DH"/>
    <property type="match status" value="1"/>
</dbReference>
<dbReference type="PIRSF" id="PIRSF000445">
    <property type="entry name" value="4pyrrol_synth_GluRdtase"/>
    <property type="match status" value="1"/>
</dbReference>
<dbReference type="SUPFAM" id="SSF69742">
    <property type="entry name" value="Glutamyl tRNA-reductase catalytic, N-terminal domain"/>
    <property type="match status" value="1"/>
</dbReference>
<dbReference type="SUPFAM" id="SSF69075">
    <property type="entry name" value="Glutamyl tRNA-reductase dimerization domain"/>
    <property type="match status" value="1"/>
</dbReference>
<dbReference type="SUPFAM" id="SSF51735">
    <property type="entry name" value="NAD(P)-binding Rossmann-fold domains"/>
    <property type="match status" value="1"/>
</dbReference>
<dbReference type="PROSITE" id="PS00747">
    <property type="entry name" value="GLUTR"/>
    <property type="match status" value="1"/>
</dbReference>
<keyword id="KW-0149">Chlorophyll biosynthesis</keyword>
<keyword id="KW-0521">NADP</keyword>
<keyword id="KW-0560">Oxidoreductase</keyword>
<keyword id="KW-0627">Porphyrin biosynthesis</keyword>
<keyword id="KW-1185">Reference proteome</keyword>
<reference key="1">
    <citation type="submission" date="2006-12" db="EMBL/GenBank/DDBJ databases">
        <title>Complete sequence of Chlorobium phaeobacteroides DSM 266.</title>
        <authorList>
            <consortium name="US DOE Joint Genome Institute"/>
            <person name="Copeland A."/>
            <person name="Lucas S."/>
            <person name="Lapidus A."/>
            <person name="Barry K."/>
            <person name="Detter J.C."/>
            <person name="Glavina del Rio T."/>
            <person name="Hammon N."/>
            <person name="Israni S."/>
            <person name="Pitluck S."/>
            <person name="Goltsman E."/>
            <person name="Schmutz J."/>
            <person name="Larimer F."/>
            <person name="Land M."/>
            <person name="Hauser L."/>
            <person name="Mikhailova N."/>
            <person name="Li T."/>
            <person name="Overmann J."/>
            <person name="Bryant D.A."/>
            <person name="Richardson P."/>
        </authorList>
    </citation>
    <scope>NUCLEOTIDE SEQUENCE [LARGE SCALE GENOMIC DNA]</scope>
    <source>
        <strain>DSM 266 / SMG 266 / 2430</strain>
    </source>
</reference>
<accession>A1BHD5</accession>
<name>HEM1_CHLPD</name>
<protein>
    <recommendedName>
        <fullName evidence="1">Glutamyl-tRNA reductase</fullName>
        <shortName evidence="1">GluTR</shortName>
        <ecNumber evidence="1">1.2.1.70</ecNumber>
    </recommendedName>
</protein>
<proteinExistence type="inferred from homology"/>
<organism>
    <name type="scientific">Chlorobium phaeobacteroides (strain DSM 266 / SMG 266 / 2430)</name>
    <dbReference type="NCBI Taxonomy" id="290317"/>
    <lineage>
        <taxon>Bacteria</taxon>
        <taxon>Pseudomonadati</taxon>
        <taxon>Chlorobiota</taxon>
        <taxon>Chlorobiia</taxon>
        <taxon>Chlorobiales</taxon>
        <taxon>Chlorobiaceae</taxon>
        <taxon>Chlorobium/Pelodictyon group</taxon>
        <taxon>Chlorobium</taxon>
    </lineage>
</organism>